<comment type="function">
    <text evidence="8 9 10">Seed storage protein.</text>
</comment>
<comment type="subunit">
    <text evidence="2 3">Hexamer; each subunit is composed of an acidic and a basic chain derived from a single precursor and linked by a disulfide bond.</text>
</comment>
<comment type="tissue specificity">
    <text evidence="2 3 4">Endosperm of the seeds.</text>
</comment>
<comment type="developmental stage">
    <text evidence="2 3 4">During seed development. Not expressed at 5-6 months after pollination (MAP), weakly expressed at 6-7 MAP and highly at 7-9 MAP. Weak expression level at 6-7 MAP after which expression gradually increases, with the highest expression at 11-12 MAP (at protein level).</text>
</comment>
<comment type="similarity">
    <text evidence="7">Belongs to the 11S seed storage protein (globulins) family.</text>
</comment>
<keyword id="KW-0002">3D-structure</keyword>
<keyword id="KW-1015">Disulfide bond</keyword>
<keyword id="KW-0708">Seed storage protein</keyword>
<keyword id="KW-0732">Signal</keyword>
<keyword id="KW-0758">Storage protein</keyword>
<accession>A0A222NNM9</accession>
<accession>A0A0R7UCU5</accession>
<feature type="signal peptide" evidence="1">
    <location>
        <begin position="1"/>
        <end position="22"/>
    </location>
</feature>
<feature type="chain" id="PRO_0000445713" description="Cocosin 1 acidic chain" evidence="10">
    <location>
        <begin position="23"/>
        <end position="281"/>
    </location>
</feature>
<feature type="chain" id="PRO_0000445714" description="Cocosin 1 basic chain" evidence="10">
    <location>
        <begin position="282"/>
        <end position="466"/>
    </location>
</feature>
<feature type="domain" description="Cupin type-1 1" evidence="1">
    <location>
        <begin position="50"/>
        <end position="242"/>
    </location>
</feature>
<feature type="domain" description="Cupin type-1 2" evidence="1">
    <location>
        <begin position="294"/>
        <end position="443"/>
    </location>
</feature>
<feature type="disulfide bond" evidence="2 3 14 15">
    <location>
        <begin position="45"/>
        <end position="78"/>
    </location>
</feature>
<feature type="disulfide bond" description="Interchain (between acidic and basic chains)" evidence="2 3 14 15">
    <location>
        <begin position="121"/>
        <end position="288"/>
    </location>
</feature>
<feature type="sequence conflict" description="In Ref. 1; AKS26848." evidence="7" ref="1">
    <original>G</original>
    <variation>A</variation>
    <location>
        <position position="2"/>
    </location>
</feature>
<feature type="sequence conflict" description="In Ref. 1; AKS26848." evidence="7" ref="1">
    <original>E</original>
    <variation>A</variation>
    <location>
        <position position="398"/>
    </location>
</feature>
<feature type="sequence conflict" description="In Ref. 1; AKS26848." evidence="7" ref="1">
    <original>I</original>
    <variation>V</variation>
    <location>
        <position position="416"/>
    </location>
</feature>
<feature type="strand" evidence="16">
    <location>
        <begin position="56"/>
        <end position="61"/>
    </location>
</feature>
<feature type="strand" evidence="16">
    <location>
        <begin position="64"/>
        <end position="68"/>
    </location>
</feature>
<feature type="helix" evidence="16">
    <location>
        <begin position="74"/>
        <end position="79"/>
    </location>
</feature>
<feature type="strand" evidence="16">
    <location>
        <begin position="82"/>
        <end position="88"/>
    </location>
</feature>
<feature type="strand" evidence="16">
    <location>
        <begin position="92"/>
        <end position="101"/>
    </location>
</feature>
<feature type="strand" evidence="16">
    <location>
        <begin position="103"/>
        <end position="109"/>
    </location>
</feature>
<feature type="strand" evidence="16">
    <location>
        <begin position="112"/>
        <end position="116"/>
    </location>
</feature>
<feature type="strand" evidence="16">
    <location>
        <begin position="125"/>
        <end position="127"/>
    </location>
</feature>
<feature type="strand" evidence="16">
    <location>
        <begin position="144"/>
        <end position="146"/>
    </location>
</feature>
<feature type="strand" evidence="16">
    <location>
        <begin position="149"/>
        <end position="152"/>
    </location>
</feature>
<feature type="strand" evidence="16">
    <location>
        <begin position="156"/>
        <end position="160"/>
    </location>
</feature>
<feature type="strand" evidence="16">
    <location>
        <begin position="166"/>
        <end position="169"/>
    </location>
</feature>
<feature type="strand" evidence="16">
    <location>
        <begin position="172"/>
        <end position="174"/>
    </location>
</feature>
<feature type="strand" evidence="16">
    <location>
        <begin position="176"/>
        <end position="182"/>
    </location>
</feature>
<feature type="strand" evidence="17">
    <location>
        <begin position="186"/>
        <end position="188"/>
    </location>
</feature>
<feature type="strand" evidence="16">
    <location>
        <begin position="197"/>
        <end position="201"/>
    </location>
</feature>
<feature type="strand" evidence="16">
    <location>
        <begin position="203"/>
        <end position="205"/>
    </location>
</feature>
<feature type="strand" evidence="16">
    <location>
        <begin position="217"/>
        <end position="219"/>
    </location>
</feature>
<feature type="helix" evidence="16">
    <location>
        <begin position="221"/>
        <end position="224"/>
    </location>
</feature>
<feature type="helix" evidence="16">
    <location>
        <begin position="227"/>
        <end position="234"/>
    </location>
</feature>
<feature type="helix" evidence="16">
    <location>
        <begin position="238"/>
        <end position="244"/>
    </location>
</feature>
<feature type="turn" evidence="16">
    <location>
        <begin position="245"/>
        <end position="248"/>
    </location>
</feature>
<feature type="strand" evidence="16">
    <location>
        <begin position="253"/>
        <end position="256"/>
    </location>
</feature>
<feature type="helix" evidence="16">
    <location>
        <begin position="283"/>
        <end position="285"/>
    </location>
</feature>
<feature type="helix" evidence="16">
    <location>
        <begin position="287"/>
        <end position="289"/>
    </location>
</feature>
<feature type="strand" evidence="16">
    <location>
        <begin position="293"/>
        <end position="295"/>
    </location>
</feature>
<feature type="helix" evidence="16">
    <location>
        <begin position="299"/>
        <end position="301"/>
    </location>
</feature>
<feature type="strand" evidence="16">
    <location>
        <begin position="303"/>
        <end position="306"/>
    </location>
</feature>
<feature type="turn" evidence="16">
    <location>
        <begin position="307"/>
        <end position="309"/>
    </location>
</feature>
<feature type="strand" evidence="16">
    <location>
        <begin position="310"/>
        <end position="316"/>
    </location>
</feature>
<feature type="turn" evidence="16">
    <location>
        <begin position="317"/>
        <end position="319"/>
    </location>
</feature>
<feature type="helix" evidence="16">
    <location>
        <begin position="323"/>
        <end position="326"/>
    </location>
</feature>
<feature type="strand" evidence="16">
    <location>
        <begin position="329"/>
        <end position="335"/>
    </location>
</feature>
<feature type="strand" evidence="16">
    <location>
        <begin position="340"/>
        <end position="349"/>
    </location>
</feature>
<feature type="strand" evidence="16">
    <location>
        <begin position="351"/>
        <end position="365"/>
    </location>
</feature>
<feature type="strand" evidence="16">
    <location>
        <begin position="371"/>
        <end position="378"/>
    </location>
</feature>
<feature type="strand" evidence="16">
    <location>
        <begin position="382"/>
        <end position="385"/>
    </location>
</feature>
<feature type="strand" evidence="16">
    <location>
        <begin position="390"/>
        <end position="408"/>
    </location>
</feature>
<feature type="strand" evidence="16">
    <location>
        <begin position="413"/>
        <end position="418"/>
    </location>
</feature>
<feature type="turn" evidence="16">
    <location>
        <begin position="422"/>
        <end position="425"/>
    </location>
</feature>
<feature type="helix" evidence="16">
    <location>
        <begin position="428"/>
        <end position="435"/>
    </location>
</feature>
<feature type="helix" evidence="16">
    <location>
        <begin position="439"/>
        <end position="447"/>
    </location>
</feature>
<feature type="strand" evidence="16">
    <location>
        <begin position="454"/>
        <end position="456"/>
    </location>
</feature>
<dbReference type="EMBL" id="KP902412">
    <property type="protein sequence ID" value="AKS26848.1"/>
    <property type="molecule type" value="mRNA"/>
</dbReference>
<dbReference type="EMBL" id="KY242371">
    <property type="protein sequence ID" value="ASQ40963.1"/>
    <property type="molecule type" value="Genomic_DNA"/>
</dbReference>
<dbReference type="PDB" id="5WPW">
    <property type="method" value="X-ray"/>
    <property type="resolution" value="1.85 A"/>
    <property type="chains" value="A/B=43-466"/>
</dbReference>
<dbReference type="PDB" id="5XTY">
    <property type="method" value="X-ray"/>
    <property type="resolution" value="2.20 A"/>
    <property type="chains" value="A/B=1-466"/>
</dbReference>
<dbReference type="PDBsum" id="5WPW"/>
<dbReference type="PDBsum" id="5XTY"/>
<dbReference type="SMR" id="A0A222NNM9"/>
<dbReference type="GO" id="GO:0043245">
    <property type="term" value="C:extraorganismal space"/>
    <property type="evidence" value="ECO:0000314"/>
    <property type="project" value="UniProtKB"/>
</dbReference>
<dbReference type="GO" id="GO:0045735">
    <property type="term" value="F:nutrient reservoir activity"/>
    <property type="evidence" value="ECO:0000314"/>
    <property type="project" value="UniProtKB"/>
</dbReference>
<dbReference type="GO" id="GO:0048316">
    <property type="term" value="P:seed development"/>
    <property type="evidence" value="ECO:0000270"/>
    <property type="project" value="UniProtKB"/>
</dbReference>
<dbReference type="GO" id="GO:0010431">
    <property type="term" value="P:seed maturation"/>
    <property type="evidence" value="ECO:0000270"/>
    <property type="project" value="UniProtKB"/>
</dbReference>
<dbReference type="CDD" id="cd02243">
    <property type="entry name" value="cupin_11S_legumin_C"/>
    <property type="match status" value="1"/>
</dbReference>
<dbReference type="CDD" id="cd02242">
    <property type="entry name" value="cupin_11S_legumin_N"/>
    <property type="match status" value="1"/>
</dbReference>
<dbReference type="FunFam" id="2.60.120.10:FF:000073">
    <property type="entry name" value="Glycinin G1"/>
    <property type="match status" value="1"/>
</dbReference>
<dbReference type="FunFam" id="2.60.120.10:FF:000124">
    <property type="entry name" value="Glycinin G5"/>
    <property type="match status" value="1"/>
</dbReference>
<dbReference type="Gene3D" id="2.60.120.10">
    <property type="entry name" value="Jelly Rolls"/>
    <property type="match status" value="2"/>
</dbReference>
<dbReference type="InterPro" id="IPR006044">
    <property type="entry name" value="11S_seedstore_pln"/>
</dbReference>
<dbReference type="InterPro" id="IPR006045">
    <property type="entry name" value="Cupin_1"/>
</dbReference>
<dbReference type="InterPro" id="IPR014710">
    <property type="entry name" value="RmlC-like_jellyroll"/>
</dbReference>
<dbReference type="InterPro" id="IPR011051">
    <property type="entry name" value="RmlC_Cupin_sf"/>
</dbReference>
<dbReference type="InterPro" id="IPR050253">
    <property type="entry name" value="Seed_Storage-Functional"/>
</dbReference>
<dbReference type="PANTHER" id="PTHR31189:SF35">
    <property type="entry name" value="12S SEED STORAGE PROTEIN CRB"/>
    <property type="match status" value="1"/>
</dbReference>
<dbReference type="PANTHER" id="PTHR31189">
    <property type="entry name" value="OS03G0336100 PROTEIN-RELATED"/>
    <property type="match status" value="1"/>
</dbReference>
<dbReference type="Pfam" id="PF00190">
    <property type="entry name" value="Cupin_1"/>
    <property type="match status" value="2"/>
</dbReference>
<dbReference type="PRINTS" id="PR00439">
    <property type="entry name" value="11SGLOBULIN"/>
</dbReference>
<dbReference type="SMART" id="SM00835">
    <property type="entry name" value="Cupin_1"/>
    <property type="match status" value="2"/>
</dbReference>
<dbReference type="SUPFAM" id="SSF51182">
    <property type="entry name" value="RmlC-like cupins"/>
    <property type="match status" value="1"/>
</dbReference>
<sequence>MGSSSLLSFSLCLLLLCHLSQAQFGSSQESPFQSPRRSVSSRNECRIERLNALEPTRTVRSEAGVTDYFDEDNEQFRCAGVSTIRRVIEPRGLLLPSMSNAPRLVYIVQGRGIVGLVMPGCPETFQSFQRSEREEGERHRWSRDEHQKVYQFQEGDVLAVPNGFAYWCYNNGENPVVAITVLDTSNDANQLDRSHRQFLLAGRQEQGRQRYGREGSIKENILRGFSTELLAAAFGVNMELARKLQCRDDTRGEIVRAENGLQVLRPSGMEEEEREEGRSINGFEETYCSMKIKQNIGDPRRADVFNPRGGRITTLNSEKLPILRFIQMSAERVVLYRNAMVSPHWNINAHSIMYCTGGRGRVEVADDRGETVFDGELRQGQLLIVPQNFAMLERAGSEGFQLVSIKTSDRAMVSTIVGKTSALRGMPVEVLMNSYRLSRDEARRVKLTRGDEVAIFTPRRESRAEA</sequence>
<evidence type="ECO:0000255" key="1"/>
<evidence type="ECO:0000269" key="2">
    <source>
    </source>
</evidence>
<evidence type="ECO:0000269" key="3">
    <source>
    </source>
</evidence>
<evidence type="ECO:0000269" key="4">
    <source ref="1"/>
</evidence>
<evidence type="ECO:0000303" key="5">
    <source>
    </source>
</evidence>
<evidence type="ECO:0000303" key="6">
    <source ref="1"/>
</evidence>
<evidence type="ECO:0000305" key="7"/>
<evidence type="ECO:0000305" key="8">
    <source>
    </source>
</evidence>
<evidence type="ECO:0000305" key="9">
    <source>
    </source>
</evidence>
<evidence type="ECO:0000305" key="10">
    <source ref="1"/>
</evidence>
<evidence type="ECO:0000312" key="11">
    <source>
        <dbReference type="EMBL" id="AKS26848.1"/>
    </source>
</evidence>
<evidence type="ECO:0000312" key="12">
    <source>
        <dbReference type="EMBL" id="ASQ40963.1"/>
    </source>
</evidence>
<evidence type="ECO:0000312" key="13">
    <source>
        <dbReference type="PDB" id="5WPW"/>
    </source>
</evidence>
<evidence type="ECO:0007744" key="14">
    <source>
        <dbReference type="PDB" id="5WPW"/>
    </source>
</evidence>
<evidence type="ECO:0007744" key="15">
    <source>
        <dbReference type="PDB" id="5XTY"/>
    </source>
</evidence>
<evidence type="ECO:0007829" key="16">
    <source>
        <dbReference type="PDB" id="5WPW"/>
    </source>
</evidence>
<evidence type="ECO:0007829" key="17">
    <source>
        <dbReference type="PDB" id="5XTY"/>
    </source>
</evidence>
<protein>
    <recommendedName>
        <fullName evidence="7">Cocosin 1</fullName>
    </recommendedName>
    <alternativeName>
        <fullName evidence="6 11">11S globulin 1</fullName>
    </alternativeName>
    <alternativeName>
        <fullName evidence="6">CnCOS-1</fullName>
    </alternativeName>
    <component>
        <recommendedName>
            <fullName evidence="7">Cocosin 1 acidic chain</fullName>
        </recommendedName>
    </component>
    <component>
        <recommendedName>
            <fullName evidence="7">Cocosin 1 basic chain</fullName>
        </recommendedName>
    </component>
</protein>
<organism evidence="12">
    <name type="scientific">Cocos nucifera</name>
    <name type="common">Coconut palm</name>
    <dbReference type="NCBI Taxonomy" id="13894"/>
    <lineage>
        <taxon>Eukaryota</taxon>
        <taxon>Viridiplantae</taxon>
        <taxon>Streptophyta</taxon>
        <taxon>Embryophyta</taxon>
        <taxon>Tracheophyta</taxon>
        <taxon>Spermatophyta</taxon>
        <taxon>Magnoliopsida</taxon>
        <taxon>Liliopsida</taxon>
        <taxon>Arecaceae</taxon>
        <taxon>Arecoideae</taxon>
        <taxon>Cocoseae</taxon>
        <taxon>Attaleinae</taxon>
        <taxon>Cocos</taxon>
    </lineage>
</organism>
<proteinExistence type="evidence at protein level"/>
<gene>
    <name evidence="6 11 13" type="primary">COS-1</name>
</gene>
<name>COS1_COCNU</name>
<reference evidence="11" key="1">
    <citation type="journal article" date="2015" name="Int. J. Philipp. Sci. Technol.">
        <title>Biochemical and molecular characterization of two 11S globulin isoforms from coconut and their expression analysis during seed development.</title>
        <authorList>
            <person name="Caldo K.M.P."/>
            <person name="Garcia R.N."/>
            <person name="Tecson-Mendoza E.M."/>
        </authorList>
    </citation>
    <scope>NUCLEOTIDE SEQUENCE [MRNA]</scope>
    <scope>TISSUE SPECIFICITY</scope>
    <scope>DEVELOPMENTAL STAGE</scope>
    <source>
        <strain evidence="6">cv. Laguna Tall</strain>
        <tissue evidence="6">Endosperm</tissue>
    </source>
</reference>
<reference evidence="12 14" key="2">
    <citation type="journal article" date="2017" name="J. Agric. Food Chem.">
        <title>Crystal Structure of Cocosin, A Potential Food Allergen from Coconut (Cocos nucifera).</title>
        <authorList>
            <person name="Jin T."/>
            <person name="Wang C."/>
            <person name="Zhang C."/>
            <person name="Wang Y."/>
            <person name="Chen Y.W."/>
            <person name="Guo F."/>
            <person name="Howard A."/>
            <person name="Cao M.J."/>
            <person name="Fu T.J."/>
            <person name="McHugh T.H."/>
            <person name="Zhang Y."/>
        </authorList>
    </citation>
    <scope>NUCLEOTIDE SEQUENCE [GENOMIC DNA]</scope>
    <scope>X-RAY CRYSTALLOGRAPHY (1.85 ANGSTROMS) OF 43-466</scope>
    <scope>SUBUNIT</scope>
    <scope>TISSUE SPECIFICITY</scope>
    <scope>DEVELOPMENTAL STAGE</scope>
    <scope>DISULFIDE BONDS</scope>
    <source>
        <tissue evidence="5">Endosperm</tissue>
    </source>
</reference>
<reference evidence="15" key="3">
    <citation type="journal article" date="2017" name="Mol. Immunol.">
        <title>Crystal structure determination and analysis of 11S coconut allergen: Cocosin.</title>
        <authorList>
            <person name="Vajravijayan S."/>
            <person name="Nandhagopal N."/>
            <person name="Gunasekaran K."/>
        </authorList>
    </citation>
    <scope>X-RAY CRYSTALLOGRAPHY (2.20 ANGSTROMS) OF MUTANT ALA-2; ALA-398 AND VAL-416</scope>
    <scope>SUBUNIT</scope>
    <scope>TISSUE SPECIFICITY</scope>
    <scope>DEVELOPMENTAL STAGE</scope>
    <scope>DISULFIDE BONDS</scope>
</reference>